<name>RL32_SYNR3</name>
<feature type="chain" id="PRO_1000005084" description="Large ribosomal subunit protein bL32">
    <location>
        <begin position="1"/>
        <end position="59"/>
    </location>
</feature>
<accession>A5GU32</accession>
<gene>
    <name evidence="1" type="primary">rpmF</name>
    <name evidence="1" type="synonym">rpl32</name>
    <name type="ordered locus">SynRCC307_1488</name>
</gene>
<protein>
    <recommendedName>
        <fullName evidence="1">Large ribosomal subunit protein bL32</fullName>
    </recommendedName>
    <alternativeName>
        <fullName evidence="2">50S ribosomal protein L32</fullName>
    </alternativeName>
</protein>
<reference key="1">
    <citation type="submission" date="2006-05" db="EMBL/GenBank/DDBJ databases">
        <authorList>
            <consortium name="Genoscope"/>
        </authorList>
    </citation>
    <scope>NUCLEOTIDE SEQUENCE [LARGE SCALE GENOMIC DNA]</scope>
    <source>
        <strain>RCC307</strain>
    </source>
</reference>
<comment type="similarity">
    <text evidence="1">Belongs to the bacterial ribosomal protein bL32 family.</text>
</comment>
<evidence type="ECO:0000255" key="1">
    <source>
        <dbReference type="HAMAP-Rule" id="MF_00340"/>
    </source>
</evidence>
<evidence type="ECO:0000305" key="2"/>
<proteinExistence type="inferred from homology"/>
<dbReference type="EMBL" id="CT978603">
    <property type="protein sequence ID" value="CAK28391.1"/>
    <property type="molecule type" value="Genomic_DNA"/>
</dbReference>
<dbReference type="SMR" id="A5GU32"/>
<dbReference type="STRING" id="316278.SynRCC307_1488"/>
<dbReference type="KEGG" id="syr:SynRCC307_1488"/>
<dbReference type="eggNOG" id="COG0333">
    <property type="taxonomic scope" value="Bacteria"/>
</dbReference>
<dbReference type="HOGENOM" id="CLU_199882_0_0_3"/>
<dbReference type="Proteomes" id="UP000001115">
    <property type="component" value="Chromosome"/>
</dbReference>
<dbReference type="GO" id="GO:0015934">
    <property type="term" value="C:large ribosomal subunit"/>
    <property type="evidence" value="ECO:0007669"/>
    <property type="project" value="InterPro"/>
</dbReference>
<dbReference type="GO" id="GO:0003735">
    <property type="term" value="F:structural constituent of ribosome"/>
    <property type="evidence" value="ECO:0007669"/>
    <property type="project" value="InterPro"/>
</dbReference>
<dbReference type="GO" id="GO:0006412">
    <property type="term" value="P:translation"/>
    <property type="evidence" value="ECO:0007669"/>
    <property type="project" value="UniProtKB-UniRule"/>
</dbReference>
<dbReference type="Gene3D" id="1.20.5.640">
    <property type="entry name" value="Single helix bin"/>
    <property type="match status" value="1"/>
</dbReference>
<dbReference type="HAMAP" id="MF_00340">
    <property type="entry name" value="Ribosomal_bL32"/>
    <property type="match status" value="1"/>
</dbReference>
<dbReference type="InterPro" id="IPR002677">
    <property type="entry name" value="Ribosomal_bL32"/>
</dbReference>
<dbReference type="InterPro" id="IPR044958">
    <property type="entry name" value="Ribosomal_bL32_plant/cyanobact"/>
</dbReference>
<dbReference type="InterPro" id="IPR011332">
    <property type="entry name" value="Ribosomal_zn-bd"/>
</dbReference>
<dbReference type="NCBIfam" id="TIGR01031">
    <property type="entry name" value="rpmF_bact"/>
    <property type="match status" value="1"/>
</dbReference>
<dbReference type="PANTHER" id="PTHR36083">
    <property type="entry name" value="50S RIBOSOMAL PROTEIN L32, CHLOROPLASTIC"/>
    <property type="match status" value="1"/>
</dbReference>
<dbReference type="PANTHER" id="PTHR36083:SF1">
    <property type="entry name" value="LARGE RIBOSOMAL SUBUNIT PROTEIN BL32C"/>
    <property type="match status" value="1"/>
</dbReference>
<dbReference type="Pfam" id="PF01783">
    <property type="entry name" value="Ribosomal_L32p"/>
    <property type="match status" value="1"/>
</dbReference>
<dbReference type="SUPFAM" id="SSF57829">
    <property type="entry name" value="Zn-binding ribosomal proteins"/>
    <property type="match status" value="1"/>
</dbReference>
<sequence length="59" mass="6419">MAVPKKKTSKGKRDQRHAHWKAKARVAARKALSAGKAVLSGRAQGFVYPMPEEDGEAES</sequence>
<keyword id="KW-1185">Reference proteome</keyword>
<keyword id="KW-0687">Ribonucleoprotein</keyword>
<keyword id="KW-0689">Ribosomal protein</keyword>
<organism>
    <name type="scientific">Synechococcus sp. (strain RCC307)</name>
    <dbReference type="NCBI Taxonomy" id="316278"/>
    <lineage>
        <taxon>Bacteria</taxon>
        <taxon>Bacillati</taxon>
        <taxon>Cyanobacteriota</taxon>
        <taxon>Cyanophyceae</taxon>
        <taxon>Synechococcales</taxon>
        <taxon>Synechococcaceae</taxon>
        <taxon>Synechococcus</taxon>
    </lineage>
</organism>